<accession>G0S3J5</accession>
<evidence type="ECO:0000250" key="1">
    <source>
        <dbReference type="UniProtKB" id="G0S5R3"/>
    </source>
</evidence>
<evidence type="ECO:0000250" key="2">
    <source>
        <dbReference type="UniProtKB" id="Q12196"/>
    </source>
</evidence>
<evidence type="ECO:0000250" key="3">
    <source>
        <dbReference type="UniProtKB" id="Q9BRS2"/>
    </source>
</evidence>
<evidence type="ECO:0000255" key="4">
    <source>
        <dbReference type="PIRNR" id="PIRNR038147"/>
    </source>
</evidence>
<evidence type="ECO:0000256" key="5">
    <source>
        <dbReference type="SAM" id="MobiDB-lite"/>
    </source>
</evidence>
<evidence type="ECO:0000269" key="6">
    <source>
    </source>
</evidence>
<evidence type="ECO:0000305" key="7"/>
<evidence type="ECO:0000305" key="8">
    <source>
    </source>
</evidence>
<sequence length="519" mass="59279">MTPAPEPQDPPTIHEPVATEQTDDISDWDVESDYEDGYGAPSKSQAQGGASAADRPKINAHARIDDQMTDLARHASKIRLDNLTMQQIFRDKDRTDNATSDQVLDNHTRMIILNMLNRNIISEIYGTISTGKEANVYNAVAYDNNGERIERAVKVYKTIILGFKDRERYLAGEQRFKTIVDKALSAPRKMIKLWAEKEFRNLKRLHTAGIPCPEPIYLKYNVMVMGFLGDHTNGYAFPRLHDTKITGETLEETEAEWRRLYINLLSMMRRMYQVCGLVHGDLSEYNILYNEGVLYIIDVSQSVEHDHIEATNFLRMDIRNVNDFFARRGVDTLSDRTVYHFITDSTGAVDENGMRKAIDNLYATRPPLAESEEARAEQEIDNQVFRNQFIPTTLEEVYNLEVELGKKVDTRLYQHMLADSKVPESTGGEHKSGEGGESGSEDEEGDEGESGEVESGDEEREEGEGDRFEKKRPRGKKHLDKAEKHAHKMAVKEAKREKRKEKMPKHVKKKLVAANKKRK</sequence>
<dbReference type="EC" id="2.7.11.1"/>
<dbReference type="EC" id="3.6.1.-" evidence="6"/>
<dbReference type="EMBL" id="GL988041">
    <property type="protein sequence ID" value="EGS20322.1"/>
    <property type="molecule type" value="Genomic_DNA"/>
</dbReference>
<dbReference type="RefSeq" id="XP_006692618.1">
    <property type="nucleotide sequence ID" value="XM_006692555.1"/>
</dbReference>
<dbReference type="SMR" id="G0S3J5"/>
<dbReference type="STRING" id="759272.G0S3J5"/>
<dbReference type="GeneID" id="18256186"/>
<dbReference type="KEGG" id="cthr:CTHT_0021480"/>
<dbReference type="eggNOG" id="KOG2270">
    <property type="taxonomic scope" value="Eukaryota"/>
</dbReference>
<dbReference type="HOGENOM" id="CLU_018693_4_0_1"/>
<dbReference type="OMA" id="HPMSLDF"/>
<dbReference type="OrthoDB" id="205248at2759"/>
<dbReference type="Proteomes" id="UP000008066">
    <property type="component" value="Unassembled WGS sequence"/>
</dbReference>
<dbReference type="GO" id="GO:0005737">
    <property type="term" value="C:cytoplasm"/>
    <property type="evidence" value="ECO:0007669"/>
    <property type="project" value="UniProtKB-SubCell"/>
</dbReference>
<dbReference type="GO" id="GO:0005524">
    <property type="term" value="F:ATP binding"/>
    <property type="evidence" value="ECO:0007669"/>
    <property type="project" value="UniProtKB-KW"/>
</dbReference>
<dbReference type="GO" id="GO:0016787">
    <property type="term" value="F:hydrolase activity"/>
    <property type="evidence" value="ECO:0007669"/>
    <property type="project" value="UniProtKB-KW"/>
</dbReference>
<dbReference type="GO" id="GO:0046872">
    <property type="term" value="F:metal ion binding"/>
    <property type="evidence" value="ECO:0007669"/>
    <property type="project" value="UniProtKB-KW"/>
</dbReference>
<dbReference type="GO" id="GO:0106310">
    <property type="term" value="F:protein serine kinase activity"/>
    <property type="evidence" value="ECO:0007669"/>
    <property type="project" value="RHEA"/>
</dbReference>
<dbReference type="GO" id="GO:0004674">
    <property type="term" value="F:protein serine/threonine kinase activity"/>
    <property type="evidence" value="ECO:0007669"/>
    <property type="project" value="UniProtKB-KW"/>
</dbReference>
<dbReference type="GO" id="GO:0042254">
    <property type="term" value="P:ribosome biogenesis"/>
    <property type="evidence" value="ECO:0007669"/>
    <property type="project" value="UniProtKB-KW"/>
</dbReference>
<dbReference type="FunFam" id="3.30.200.20:FF:000148">
    <property type="entry name" value="Serine/threonine-protein kinase RIO1"/>
    <property type="match status" value="1"/>
</dbReference>
<dbReference type="Gene3D" id="3.30.200.20">
    <property type="entry name" value="Phosphorylase Kinase, domain 1"/>
    <property type="match status" value="1"/>
</dbReference>
<dbReference type="Gene3D" id="1.10.510.10">
    <property type="entry name" value="Transferase(Phosphotransferase) domain 1"/>
    <property type="match status" value="1"/>
</dbReference>
<dbReference type="InterPro" id="IPR011009">
    <property type="entry name" value="Kinase-like_dom_sf"/>
</dbReference>
<dbReference type="InterPro" id="IPR051272">
    <property type="entry name" value="RIO-type_Ser/Thr_kinase"/>
</dbReference>
<dbReference type="InterPro" id="IPR018934">
    <property type="entry name" value="RIO_dom"/>
</dbReference>
<dbReference type="InterPro" id="IPR000687">
    <property type="entry name" value="RIO_kinase"/>
</dbReference>
<dbReference type="InterPro" id="IPR018935">
    <property type="entry name" value="RIO_kinase_CS"/>
</dbReference>
<dbReference type="InterPro" id="IPR017407">
    <property type="entry name" value="Ser/Thr_kinase_Rio1"/>
</dbReference>
<dbReference type="InterPro" id="IPR008266">
    <property type="entry name" value="Tyr_kinase_AS"/>
</dbReference>
<dbReference type="PANTHER" id="PTHR45723">
    <property type="entry name" value="SERINE/THREONINE-PROTEIN KINASE RIO1"/>
    <property type="match status" value="1"/>
</dbReference>
<dbReference type="Pfam" id="PF01163">
    <property type="entry name" value="RIO1"/>
    <property type="match status" value="1"/>
</dbReference>
<dbReference type="PIRSF" id="PIRSF038147">
    <property type="entry name" value="Ser/Thr_PK_RIO1"/>
    <property type="match status" value="1"/>
</dbReference>
<dbReference type="SMART" id="SM00090">
    <property type="entry name" value="RIO"/>
    <property type="match status" value="1"/>
</dbReference>
<dbReference type="SUPFAM" id="SSF56112">
    <property type="entry name" value="Protein kinase-like (PK-like)"/>
    <property type="match status" value="1"/>
</dbReference>
<dbReference type="PROSITE" id="PS00109">
    <property type="entry name" value="PROTEIN_KINASE_TYR"/>
    <property type="match status" value="1"/>
</dbReference>
<dbReference type="PROSITE" id="PS01245">
    <property type="entry name" value="RIO1"/>
    <property type="match status" value="1"/>
</dbReference>
<gene>
    <name type="ORF">CTHT_0021480</name>
</gene>
<feature type="chain" id="PRO_0000439042" description="Serine/threonine-protein kinase RIO1">
    <location>
        <begin position="1"/>
        <end position="519"/>
    </location>
</feature>
<feature type="domain" description="Protein kinase">
    <location>
        <begin position="122"/>
        <end position="519"/>
    </location>
</feature>
<feature type="region of interest" description="Disordered" evidence="5">
    <location>
        <begin position="1"/>
        <end position="54"/>
    </location>
</feature>
<feature type="region of interest" description="Disordered" evidence="5">
    <location>
        <begin position="418"/>
        <end position="519"/>
    </location>
</feature>
<feature type="region of interest" description="Association with (pre-)40S ribosomal particle" evidence="6">
    <location>
        <begin position="440"/>
        <end position="519"/>
    </location>
</feature>
<feature type="compositionally biased region" description="Pro residues" evidence="5">
    <location>
        <begin position="1"/>
        <end position="10"/>
    </location>
</feature>
<feature type="compositionally biased region" description="Acidic residues" evidence="5">
    <location>
        <begin position="21"/>
        <end position="36"/>
    </location>
</feature>
<feature type="compositionally biased region" description="Low complexity" evidence="5">
    <location>
        <begin position="39"/>
        <end position="53"/>
    </location>
</feature>
<feature type="compositionally biased region" description="Acidic residues" evidence="5">
    <location>
        <begin position="439"/>
        <end position="464"/>
    </location>
</feature>
<feature type="compositionally biased region" description="Basic residues" evidence="5">
    <location>
        <begin position="470"/>
        <end position="489"/>
    </location>
</feature>
<feature type="compositionally biased region" description="Basic residues" evidence="5">
    <location>
        <begin position="497"/>
        <end position="519"/>
    </location>
</feature>
<feature type="active site" description="Proton acceptor" evidence="3">
    <location>
        <position position="281"/>
    </location>
</feature>
<feature type="active site" description="4-aspartylphosphate intermediate" evidence="8">
    <location>
        <position position="298"/>
    </location>
</feature>
<feature type="binding site" evidence="3">
    <location>
        <position position="154"/>
    </location>
    <ligand>
        <name>ATP</name>
        <dbReference type="ChEBI" id="CHEBI:30616"/>
    </ligand>
</feature>
<feature type="binding site" evidence="3">
    <location>
        <position position="228"/>
    </location>
    <ligand>
        <name>ATP</name>
        <dbReference type="ChEBI" id="CHEBI:30616"/>
    </ligand>
</feature>
<feature type="binding site" evidence="3">
    <location>
        <position position="286"/>
    </location>
    <ligand>
        <name>Mg(2+)</name>
        <dbReference type="ChEBI" id="CHEBI:18420"/>
    </ligand>
</feature>
<feature type="binding site" evidence="3">
    <location>
        <position position="298"/>
    </location>
    <ligand>
        <name>Mg(2+)</name>
        <dbReference type="ChEBI" id="CHEBI:18420"/>
    </ligand>
</feature>
<feature type="mutagenesis site" description="Decreases ATPase activity." evidence="6">
    <original>D</original>
    <variation>A</variation>
    <location>
        <position position="281"/>
    </location>
</feature>
<feature type="mutagenesis site" description="Decreases ATPase activity." evidence="6">
    <original>D</original>
    <variation>A</variation>
    <location>
        <position position="298"/>
    </location>
</feature>
<reference key="1">
    <citation type="journal article" date="2011" name="Cell">
        <title>Insight into structure and assembly of the nuclear pore complex by utilizing the genome of a eukaryotic thermophile.</title>
        <authorList>
            <person name="Amlacher S."/>
            <person name="Sarges P."/>
            <person name="Flemming D."/>
            <person name="van Noort V."/>
            <person name="Kunze R."/>
            <person name="Devos D.P."/>
            <person name="Arumugam M."/>
            <person name="Bork P."/>
            <person name="Hurt E."/>
        </authorList>
    </citation>
    <scope>NUCLEOTIDE SEQUENCE [LARGE SCALE GENOMIC DNA]</scope>
    <source>
        <strain>DSM 1495 / CBS 144.50 / IMI 039719</strain>
    </source>
</reference>
<reference key="2">
    <citation type="journal article" date="2014" name="Nucleic Acids Res.">
        <title>Dominant Rio1 kinase/ATPase catalytic mutant induces trapping of late pre-40S biogenesis factors in 80S-like ribosomes.</title>
        <authorList>
            <person name="Ferreira-Cerca S."/>
            <person name="Kiburu I."/>
            <person name="Thomson E."/>
            <person name="LaRonde N."/>
            <person name="Hurt E."/>
        </authorList>
    </citation>
    <scope>FUNCTION</scope>
    <scope>CATALYTIC ACTIVITY</scope>
    <scope>PHOSPHORYLATION</scope>
    <scope>MUTAGENESIS OF ASP-281 AND ASP-298</scope>
</reference>
<organism>
    <name type="scientific">Chaetomium thermophilum (strain DSM 1495 / CBS 144.50 / IMI 039719)</name>
    <name type="common">Thermochaetoides thermophila</name>
    <dbReference type="NCBI Taxonomy" id="759272"/>
    <lineage>
        <taxon>Eukaryota</taxon>
        <taxon>Fungi</taxon>
        <taxon>Dikarya</taxon>
        <taxon>Ascomycota</taxon>
        <taxon>Pezizomycotina</taxon>
        <taxon>Sordariomycetes</taxon>
        <taxon>Sordariomycetidae</taxon>
        <taxon>Sordariales</taxon>
        <taxon>Chaetomiaceae</taxon>
        <taxon>Thermochaetoides</taxon>
    </lineage>
</organism>
<name>RIO1_CHATD</name>
<keyword id="KW-0067">ATP-binding</keyword>
<keyword id="KW-0963">Cytoplasm</keyword>
<keyword id="KW-0378">Hydrolase</keyword>
<keyword id="KW-0418">Kinase</keyword>
<keyword id="KW-0460">Magnesium</keyword>
<keyword id="KW-0479">Metal-binding</keyword>
<keyword id="KW-0547">Nucleotide-binding</keyword>
<keyword id="KW-1185">Reference proteome</keyword>
<keyword id="KW-0690">Ribosome biogenesis</keyword>
<keyword id="KW-0723">Serine/threonine-protein kinase</keyword>
<keyword id="KW-0808">Transferase</keyword>
<proteinExistence type="evidence at protein level"/>
<protein>
    <recommendedName>
        <fullName>Serine/threonine-protein kinase RIO1</fullName>
        <ecNumber>2.7.11.1</ecNumber>
        <ecNumber evidence="6">3.6.1.-</ecNumber>
    </recommendedName>
</protein>
<comment type="function">
    <text evidence="2 6">Involved in the final steps of cytoplasmic maturation of the 40S ribosomal subunit (By similarity). In vitro, has strong ATPase activity and only low protein kinase activity (PubMed:24948609).</text>
</comment>
<comment type="catalytic activity">
    <reaction evidence="4">
        <text>L-seryl-[protein] + ATP = O-phospho-L-seryl-[protein] + ADP + H(+)</text>
        <dbReference type="Rhea" id="RHEA:17989"/>
        <dbReference type="Rhea" id="RHEA-COMP:9863"/>
        <dbReference type="Rhea" id="RHEA-COMP:11604"/>
        <dbReference type="ChEBI" id="CHEBI:15378"/>
        <dbReference type="ChEBI" id="CHEBI:29999"/>
        <dbReference type="ChEBI" id="CHEBI:30616"/>
        <dbReference type="ChEBI" id="CHEBI:83421"/>
        <dbReference type="ChEBI" id="CHEBI:456216"/>
        <dbReference type="EC" id="2.7.11.1"/>
    </reaction>
</comment>
<comment type="catalytic activity">
    <reaction evidence="4">
        <text>L-threonyl-[protein] + ATP = O-phospho-L-threonyl-[protein] + ADP + H(+)</text>
        <dbReference type="Rhea" id="RHEA:46608"/>
        <dbReference type="Rhea" id="RHEA-COMP:11060"/>
        <dbReference type="Rhea" id="RHEA-COMP:11605"/>
        <dbReference type="ChEBI" id="CHEBI:15378"/>
        <dbReference type="ChEBI" id="CHEBI:30013"/>
        <dbReference type="ChEBI" id="CHEBI:30616"/>
        <dbReference type="ChEBI" id="CHEBI:61977"/>
        <dbReference type="ChEBI" id="CHEBI:456216"/>
        <dbReference type="EC" id="2.7.11.1"/>
    </reaction>
</comment>
<comment type="catalytic activity">
    <reaction evidence="6">
        <text>ATP + H2O = ADP + phosphate + H(+)</text>
        <dbReference type="Rhea" id="RHEA:13065"/>
        <dbReference type="ChEBI" id="CHEBI:15377"/>
        <dbReference type="ChEBI" id="CHEBI:15378"/>
        <dbReference type="ChEBI" id="CHEBI:30616"/>
        <dbReference type="ChEBI" id="CHEBI:43474"/>
        <dbReference type="ChEBI" id="CHEBI:456216"/>
    </reaction>
</comment>
<comment type="cofactor">
    <cofactor evidence="1 3">
        <name>Mg(2+)</name>
        <dbReference type="ChEBI" id="CHEBI:18420"/>
    </cofactor>
</comment>
<comment type="subcellular location">
    <subcellularLocation>
        <location evidence="7">Cytoplasm</location>
    </subcellularLocation>
</comment>
<comment type="PTM">
    <text evidence="6">Autophosphorylated.</text>
</comment>
<comment type="similarity">
    <text evidence="7">Belongs to the protein kinase superfamily. RIO-type Ser/Thr kinase family.</text>
</comment>